<reference key="1">
    <citation type="journal article" date="2007" name="Proc. Natl. Acad. Sci. U.S.A.">
        <title>Deep-sea vent epsilon-proteobacterial genomes provide insights into emergence of pathogens.</title>
        <authorList>
            <person name="Nakagawa S."/>
            <person name="Takaki Y."/>
            <person name="Shimamura S."/>
            <person name="Reysenbach A.-L."/>
            <person name="Takai K."/>
            <person name="Horikoshi K."/>
        </authorList>
    </citation>
    <scope>NUCLEOTIDE SEQUENCE [LARGE SCALE GENOMIC DNA]</scope>
    <source>
        <strain>SB155-2</strain>
    </source>
</reference>
<gene>
    <name evidence="1" type="primary">purC</name>
    <name type="ordered locus">NIS_0874</name>
</gene>
<accession>A6Q3C7</accession>
<name>PUR7_NITSB</name>
<sequence>MKKTELLYEGKAKKIWKTDDENILIAEFKDSLTAFDAQKKSEEAGKGALNCKISANLFKLLEEQGIKTHFVECISENEMVIKKAEMIMIEVVVRNIATGSLTKRLGIPDGTKLPFALVEFYYKNDALHDPLINDEHALILELVDHESELEELKRLGREINVVLKSFFDKANLNLVDFKVEFGKDSEGNIILADEISPDSCRFWDKTSGEKLDKDLFRHDLGNVKVAYEEVLKRITKVMQ</sequence>
<organism>
    <name type="scientific">Nitratiruptor sp. (strain SB155-2)</name>
    <dbReference type="NCBI Taxonomy" id="387092"/>
    <lineage>
        <taxon>Bacteria</taxon>
        <taxon>Pseudomonadati</taxon>
        <taxon>Campylobacterota</taxon>
        <taxon>Epsilonproteobacteria</taxon>
        <taxon>Nautiliales</taxon>
        <taxon>Nitratiruptoraceae</taxon>
        <taxon>Nitratiruptor</taxon>
    </lineage>
</organism>
<keyword id="KW-0067">ATP-binding</keyword>
<keyword id="KW-0436">Ligase</keyword>
<keyword id="KW-0547">Nucleotide-binding</keyword>
<keyword id="KW-0658">Purine biosynthesis</keyword>
<keyword id="KW-1185">Reference proteome</keyword>
<feature type="chain" id="PRO_1000018743" description="Phosphoribosylaminoimidazole-succinocarboxamide synthase">
    <location>
        <begin position="1"/>
        <end position="239"/>
    </location>
</feature>
<comment type="catalytic activity">
    <reaction evidence="1">
        <text>5-amino-1-(5-phospho-D-ribosyl)imidazole-4-carboxylate + L-aspartate + ATP = (2S)-2-[5-amino-1-(5-phospho-beta-D-ribosyl)imidazole-4-carboxamido]succinate + ADP + phosphate + 2 H(+)</text>
        <dbReference type="Rhea" id="RHEA:22628"/>
        <dbReference type="ChEBI" id="CHEBI:15378"/>
        <dbReference type="ChEBI" id="CHEBI:29991"/>
        <dbReference type="ChEBI" id="CHEBI:30616"/>
        <dbReference type="ChEBI" id="CHEBI:43474"/>
        <dbReference type="ChEBI" id="CHEBI:58443"/>
        <dbReference type="ChEBI" id="CHEBI:77657"/>
        <dbReference type="ChEBI" id="CHEBI:456216"/>
        <dbReference type="EC" id="6.3.2.6"/>
    </reaction>
</comment>
<comment type="pathway">
    <text evidence="1">Purine metabolism; IMP biosynthesis via de novo pathway; 5-amino-1-(5-phospho-D-ribosyl)imidazole-4-carboxamide from 5-amino-1-(5-phospho-D-ribosyl)imidazole-4-carboxylate: step 1/2.</text>
</comment>
<comment type="similarity">
    <text evidence="1">Belongs to the SAICAR synthetase family.</text>
</comment>
<protein>
    <recommendedName>
        <fullName evidence="1">Phosphoribosylaminoimidazole-succinocarboxamide synthase</fullName>
        <ecNumber evidence="1">6.3.2.6</ecNumber>
    </recommendedName>
    <alternativeName>
        <fullName evidence="1">SAICAR synthetase</fullName>
    </alternativeName>
</protein>
<dbReference type="EC" id="6.3.2.6" evidence="1"/>
<dbReference type="EMBL" id="AP009178">
    <property type="protein sequence ID" value="BAF69986.1"/>
    <property type="molecule type" value="Genomic_DNA"/>
</dbReference>
<dbReference type="RefSeq" id="WP_012082249.1">
    <property type="nucleotide sequence ID" value="NC_009662.1"/>
</dbReference>
<dbReference type="SMR" id="A6Q3C7"/>
<dbReference type="FunCoup" id="A6Q3C7">
    <property type="interactions" value="421"/>
</dbReference>
<dbReference type="STRING" id="387092.NIS_0874"/>
<dbReference type="KEGG" id="nis:NIS_0874"/>
<dbReference type="eggNOG" id="COG0152">
    <property type="taxonomic scope" value="Bacteria"/>
</dbReference>
<dbReference type="HOGENOM" id="CLU_061495_2_0_7"/>
<dbReference type="InParanoid" id="A6Q3C7"/>
<dbReference type="OrthoDB" id="9801549at2"/>
<dbReference type="UniPathway" id="UPA00074">
    <property type="reaction ID" value="UER00131"/>
</dbReference>
<dbReference type="Proteomes" id="UP000001118">
    <property type="component" value="Chromosome"/>
</dbReference>
<dbReference type="GO" id="GO:0005524">
    <property type="term" value="F:ATP binding"/>
    <property type="evidence" value="ECO:0007669"/>
    <property type="project" value="UniProtKB-KW"/>
</dbReference>
<dbReference type="GO" id="GO:0004639">
    <property type="term" value="F:phosphoribosylaminoimidazolesuccinocarboxamide synthase activity"/>
    <property type="evidence" value="ECO:0007669"/>
    <property type="project" value="UniProtKB-UniRule"/>
</dbReference>
<dbReference type="GO" id="GO:0006189">
    <property type="term" value="P:'de novo' IMP biosynthetic process"/>
    <property type="evidence" value="ECO:0007669"/>
    <property type="project" value="UniProtKB-UniRule"/>
</dbReference>
<dbReference type="GO" id="GO:0009236">
    <property type="term" value="P:cobalamin biosynthetic process"/>
    <property type="evidence" value="ECO:0007669"/>
    <property type="project" value="InterPro"/>
</dbReference>
<dbReference type="CDD" id="cd01415">
    <property type="entry name" value="SAICAR_synt_PurC"/>
    <property type="match status" value="1"/>
</dbReference>
<dbReference type="FunFam" id="3.30.470.20:FF:000006">
    <property type="entry name" value="Phosphoribosylaminoimidazole-succinocarboxamide synthase"/>
    <property type="match status" value="1"/>
</dbReference>
<dbReference type="Gene3D" id="3.30.470.20">
    <property type="entry name" value="ATP-grasp fold, B domain"/>
    <property type="match status" value="1"/>
</dbReference>
<dbReference type="Gene3D" id="3.30.200.20">
    <property type="entry name" value="Phosphorylase Kinase, domain 1"/>
    <property type="match status" value="1"/>
</dbReference>
<dbReference type="HAMAP" id="MF_00137">
    <property type="entry name" value="SAICAR_synth"/>
    <property type="match status" value="1"/>
</dbReference>
<dbReference type="InterPro" id="IPR028923">
    <property type="entry name" value="SAICAR_synt/ADE2_N"/>
</dbReference>
<dbReference type="InterPro" id="IPR033934">
    <property type="entry name" value="SAICAR_synt_PurC"/>
</dbReference>
<dbReference type="InterPro" id="IPR001636">
    <property type="entry name" value="SAICAR_synth"/>
</dbReference>
<dbReference type="InterPro" id="IPR050089">
    <property type="entry name" value="SAICAR_synthetase"/>
</dbReference>
<dbReference type="NCBIfam" id="TIGR00081">
    <property type="entry name" value="purC"/>
    <property type="match status" value="1"/>
</dbReference>
<dbReference type="PANTHER" id="PTHR43599">
    <property type="entry name" value="MULTIFUNCTIONAL PROTEIN ADE2"/>
    <property type="match status" value="1"/>
</dbReference>
<dbReference type="PANTHER" id="PTHR43599:SF3">
    <property type="entry name" value="SI:DKEY-6E2.2"/>
    <property type="match status" value="1"/>
</dbReference>
<dbReference type="Pfam" id="PF01259">
    <property type="entry name" value="SAICAR_synt"/>
    <property type="match status" value="1"/>
</dbReference>
<dbReference type="SUPFAM" id="SSF56104">
    <property type="entry name" value="SAICAR synthase-like"/>
    <property type="match status" value="1"/>
</dbReference>
<evidence type="ECO:0000255" key="1">
    <source>
        <dbReference type="HAMAP-Rule" id="MF_00137"/>
    </source>
</evidence>
<proteinExistence type="inferred from homology"/>